<dbReference type="EMBL" id="CP000821">
    <property type="protein sequence ID" value="ABV35562.1"/>
    <property type="molecule type" value="Genomic_DNA"/>
</dbReference>
<dbReference type="RefSeq" id="WP_012141298.1">
    <property type="nucleotide sequence ID" value="NC_009831.1"/>
</dbReference>
<dbReference type="SMR" id="A8FRT9"/>
<dbReference type="STRING" id="425104.Ssed_0951"/>
<dbReference type="KEGG" id="sse:Ssed_0951"/>
<dbReference type="eggNOG" id="COG1438">
    <property type="taxonomic scope" value="Bacteria"/>
</dbReference>
<dbReference type="HOGENOM" id="CLU_097103_2_0_6"/>
<dbReference type="OrthoDB" id="7060358at2"/>
<dbReference type="UniPathway" id="UPA00068"/>
<dbReference type="Proteomes" id="UP000002015">
    <property type="component" value="Chromosome"/>
</dbReference>
<dbReference type="GO" id="GO:0005737">
    <property type="term" value="C:cytoplasm"/>
    <property type="evidence" value="ECO:0007669"/>
    <property type="project" value="UniProtKB-SubCell"/>
</dbReference>
<dbReference type="GO" id="GO:0034618">
    <property type="term" value="F:arginine binding"/>
    <property type="evidence" value="ECO:0007669"/>
    <property type="project" value="InterPro"/>
</dbReference>
<dbReference type="GO" id="GO:0003677">
    <property type="term" value="F:DNA binding"/>
    <property type="evidence" value="ECO:0007669"/>
    <property type="project" value="UniProtKB-KW"/>
</dbReference>
<dbReference type="GO" id="GO:0003700">
    <property type="term" value="F:DNA-binding transcription factor activity"/>
    <property type="evidence" value="ECO:0007669"/>
    <property type="project" value="UniProtKB-UniRule"/>
</dbReference>
<dbReference type="GO" id="GO:0006526">
    <property type="term" value="P:L-arginine biosynthetic process"/>
    <property type="evidence" value="ECO:0007669"/>
    <property type="project" value="UniProtKB-UniPathway"/>
</dbReference>
<dbReference type="GO" id="GO:0051259">
    <property type="term" value="P:protein complex oligomerization"/>
    <property type="evidence" value="ECO:0007669"/>
    <property type="project" value="InterPro"/>
</dbReference>
<dbReference type="GO" id="GO:1900079">
    <property type="term" value="P:regulation of arginine biosynthetic process"/>
    <property type="evidence" value="ECO:0007669"/>
    <property type="project" value="UniProtKB-UniRule"/>
</dbReference>
<dbReference type="Gene3D" id="3.30.1360.40">
    <property type="match status" value="1"/>
</dbReference>
<dbReference type="Gene3D" id="1.10.10.10">
    <property type="entry name" value="Winged helix-like DNA-binding domain superfamily/Winged helix DNA-binding domain"/>
    <property type="match status" value="1"/>
</dbReference>
<dbReference type="HAMAP" id="MF_00173">
    <property type="entry name" value="Arg_repressor"/>
    <property type="match status" value="1"/>
</dbReference>
<dbReference type="InterPro" id="IPR001669">
    <property type="entry name" value="Arg_repress"/>
</dbReference>
<dbReference type="InterPro" id="IPR020899">
    <property type="entry name" value="Arg_repress_C"/>
</dbReference>
<dbReference type="InterPro" id="IPR036251">
    <property type="entry name" value="Arg_repress_C_sf"/>
</dbReference>
<dbReference type="InterPro" id="IPR020900">
    <property type="entry name" value="Arg_repress_DNA-bd"/>
</dbReference>
<dbReference type="InterPro" id="IPR036388">
    <property type="entry name" value="WH-like_DNA-bd_sf"/>
</dbReference>
<dbReference type="InterPro" id="IPR036390">
    <property type="entry name" value="WH_DNA-bd_sf"/>
</dbReference>
<dbReference type="NCBIfam" id="TIGR01529">
    <property type="entry name" value="argR_whole"/>
    <property type="match status" value="1"/>
</dbReference>
<dbReference type="NCBIfam" id="NF003457">
    <property type="entry name" value="PRK05066.1"/>
    <property type="match status" value="1"/>
</dbReference>
<dbReference type="PANTHER" id="PTHR34471">
    <property type="entry name" value="ARGININE REPRESSOR"/>
    <property type="match status" value="1"/>
</dbReference>
<dbReference type="PANTHER" id="PTHR34471:SF1">
    <property type="entry name" value="ARGININE REPRESSOR"/>
    <property type="match status" value="1"/>
</dbReference>
<dbReference type="Pfam" id="PF01316">
    <property type="entry name" value="Arg_repressor"/>
    <property type="match status" value="1"/>
</dbReference>
<dbReference type="Pfam" id="PF02863">
    <property type="entry name" value="Arg_repressor_C"/>
    <property type="match status" value="1"/>
</dbReference>
<dbReference type="PRINTS" id="PR01467">
    <property type="entry name" value="ARGREPRESSOR"/>
</dbReference>
<dbReference type="SUPFAM" id="SSF55252">
    <property type="entry name" value="C-terminal domain of arginine repressor"/>
    <property type="match status" value="1"/>
</dbReference>
<dbReference type="SUPFAM" id="SSF46785">
    <property type="entry name" value="Winged helix' DNA-binding domain"/>
    <property type="match status" value="1"/>
</dbReference>
<evidence type="ECO:0000255" key="1">
    <source>
        <dbReference type="HAMAP-Rule" id="MF_00173"/>
    </source>
</evidence>
<accession>A8FRT9</accession>
<comment type="function">
    <text evidence="1">Regulates arginine biosynthesis genes.</text>
</comment>
<comment type="pathway">
    <text>Amino-acid biosynthesis; L-arginine biosynthesis [regulation].</text>
</comment>
<comment type="subcellular location">
    <subcellularLocation>
        <location evidence="1">Cytoplasm</location>
    </subcellularLocation>
</comment>
<comment type="similarity">
    <text evidence="1">Belongs to the ArgR family.</text>
</comment>
<reference key="1">
    <citation type="submission" date="2007-08" db="EMBL/GenBank/DDBJ databases">
        <title>Complete sequence of Shewanella sediminis HAW-EB3.</title>
        <authorList>
            <consortium name="US DOE Joint Genome Institute"/>
            <person name="Copeland A."/>
            <person name="Lucas S."/>
            <person name="Lapidus A."/>
            <person name="Barry K."/>
            <person name="Glavina del Rio T."/>
            <person name="Dalin E."/>
            <person name="Tice H."/>
            <person name="Pitluck S."/>
            <person name="Chertkov O."/>
            <person name="Brettin T."/>
            <person name="Bruce D."/>
            <person name="Detter J.C."/>
            <person name="Han C."/>
            <person name="Schmutz J."/>
            <person name="Larimer F."/>
            <person name="Land M."/>
            <person name="Hauser L."/>
            <person name="Kyrpides N."/>
            <person name="Kim E."/>
            <person name="Zhao J.-S."/>
            <person name="Richardson P."/>
        </authorList>
    </citation>
    <scope>NUCLEOTIDE SEQUENCE [LARGE SCALE GENOMIC DNA]</scope>
    <source>
        <strain>HAW-EB3</strain>
    </source>
</reference>
<protein>
    <recommendedName>
        <fullName evidence="1">Arginine repressor</fullName>
    </recommendedName>
</protein>
<sequence>MQANRSQDDLVKTFKAILKEERFGSQSEIVLALQAEGYGNINQSKVSRMLSKFGAVRTRNAKQEMVYCLPAELGVPTAGSPLKNLVLDVDHNQSMIVVRTSPGAAQLIARLLDSIGKPEGILGTIAGDDTIFITPSNIHEIDKTLDTVKSLFNFND</sequence>
<feature type="chain" id="PRO_1000077135" description="Arginine repressor">
    <location>
        <begin position="1"/>
        <end position="156"/>
    </location>
</feature>
<organism>
    <name type="scientific">Shewanella sediminis (strain HAW-EB3)</name>
    <dbReference type="NCBI Taxonomy" id="425104"/>
    <lineage>
        <taxon>Bacteria</taxon>
        <taxon>Pseudomonadati</taxon>
        <taxon>Pseudomonadota</taxon>
        <taxon>Gammaproteobacteria</taxon>
        <taxon>Alteromonadales</taxon>
        <taxon>Shewanellaceae</taxon>
        <taxon>Shewanella</taxon>
    </lineage>
</organism>
<gene>
    <name evidence="1" type="primary">argR</name>
    <name type="ordered locus">Ssed_0951</name>
</gene>
<proteinExistence type="inferred from homology"/>
<keyword id="KW-0028">Amino-acid biosynthesis</keyword>
<keyword id="KW-0055">Arginine biosynthesis</keyword>
<keyword id="KW-0963">Cytoplasm</keyword>
<keyword id="KW-0238">DNA-binding</keyword>
<keyword id="KW-1185">Reference proteome</keyword>
<keyword id="KW-0678">Repressor</keyword>
<keyword id="KW-0804">Transcription</keyword>
<keyword id="KW-0805">Transcription regulation</keyword>
<name>ARGR_SHESH</name>